<keyword id="KW-0028">Amino-acid biosynthesis</keyword>
<keyword id="KW-0057">Aromatic amino acid biosynthesis</keyword>
<keyword id="KW-0456">Lyase</keyword>
<keyword id="KW-0663">Pyridoxal phosphate</keyword>
<keyword id="KW-0822">Tryptophan biosynthesis</keyword>
<reference key="1">
    <citation type="journal article" date="2004" name="Proc. Natl. Acad. Sci. U.S.A.">
        <title>Insights into the evolution of Yersinia pestis through whole-genome comparison with Yersinia pseudotuberculosis.</title>
        <authorList>
            <person name="Chain P.S.G."/>
            <person name="Carniel E."/>
            <person name="Larimer F.W."/>
            <person name="Lamerdin J."/>
            <person name="Stoutland P.O."/>
            <person name="Regala W.M."/>
            <person name="Georgescu A.M."/>
            <person name="Vergez L.M."/>
            <person name="Land M.L."/>
            <person name="Motin V.L."/>
            <person name="Brubaker R.R."/>
            <person name="Fowler J."/>
            <person name="Hinnebusch J."/>
            <person name="Marceau M."/>
            <person name="Medigue C."/>
            <person name="Simonet M."/>
            <person name="Chenal-Francisque V."/>
            <person name="Souza B."/>
            <person name="Dacheux D."/>
            <person name="Elliott J.M."/>
            <person name="Derbise A."/>
            <person name="Hauser L.J."/>
            <person name="Garcia E."/>
        </authorList>
    </citation>
    <scope>NUCLEOTIDE SEQUENCE [LARGE SCALE GENOMIC DNA]</scope>
    <source>
        <strain>IP32953</strain>
    </source>
</reference>
<name>TRPB_YERPS</name>
<proteinExistence type="inferred from homology"/>
<comment type="function">
    <text evidence="1">The beta subunit is responsible for the synthesis of L-tryptophan from indole and L-serine.</text>
</comment>
<comment type="catalytic activity">
    <reaction evidence="1">
        <text>(1S,2R)-1-C-(indol-3-yl)glycerol 3-phosphate + L-serine = D-glyceraldehyde 3-phosphate + L-tryptophan + H2O</text>
        <dbReference type="Rhea" id="RHEA:10532"/>
        <dbReference type="ChEBI" id="CHEBI:15377"/>
        <dbReference type="ChEBI" id="CHEBI:33384"/>
        <dbReference type="ChEBI" id="CHEBI:57912"/>
        <dbReference type="ChEBI" id="CHEBI:58866"/>
        <dbReference type="ChEBI" id="CHEBI:59776"/>
        <dbReference type="EC" id="4.2.1.20"/>
    </reaction>
</comment>
<comment type="cofactor">
    <cofactor evidence="1">
        <name>pyridoxal 5'-phosphate</name>
        <dbReference type="ChEBI" id="CHEBI:597326"/>
    </cofactor>
</comment>
<comment type="pathway">
    <text evidence="1">Amino-acid biosynthesis; L-tryptophan biosynthesis; L-tryptophan from chorismate: step 5/5.</text>
</comment>
<comment type="subunit">
    <text evidence="1">Tetramer of two alpha and two beta chains.</text>
</comment>
<comment type="similarity">
    <text evidence="1">Belongs to the TrpB family.</text>
</comment>
<accession>Q66AK4</accession>
<feature type="chain" id="PRO_1000018428" description="Tryptophan synthase beta chain">
    <location>
        <begin position="1"/>
        <end position="396"/>
    </location>
</feature>
<feature type="modified residue" description="N6-(pyridoxal phosphate)lysine" evidence="1">
    <location>
        <position position="86"/>
    </location>
</feature>
<dbReference type="EC" id="4.2.1.20" evidence="1"/>
<dbReference type="EMBL" id="BX936398">
    <property type="protein sequence ID" value="CAH21364.1"/>
    <property type="molecule type" value="Genomic_DNA"/>
</dbReference>
<dbReference type="RefSeq" id="WP_002210633.1">
    <property type="nucleotide sequence ID" value="NZ_CP009712.1"/>
</dbReference>
<dbReference type="SMR" id="Q66AK4"/>
<dbReference type="GeneID" id="57976463"/>
<dbReference type="KEGG" id="ypo:BZ17_336"/>
<dbReference type="KEGG" id="yps:YPTB2126"/>
<dbReference type="PATRIC" id="fig|273123.14.peg.356"/>
<dbReference type="UniPathway" id="UPA00035">
    <property type="reaction ID" value="UER00044"/>
</dbReference>
<dbReference type="Proteomes" id="UP000001011">
    <property type="component" value="Chromosome"/>
</dbReference>
<dbReference type="GO" id="GO:0005737">
    <property type="term" value="C:cytoplasm"/>
    <property type="evidence" value="ECO:0007669"/>
    <property type="project" value="TreeGrafter"/>
</dbReference>
<dbReference type="GO" id="GO:0004834">
    <property type="term" value="F:tryptophan synthase activity"/>
    <property type="evidence" value="ECO:0007669"/>
    <property type="project" value="UniProtKB-UniRule"/>
</dbReference>
<dbReference type="CDD" id="cd06446">
    <property type="entry name" value="Trp-synth_B"/>
    <property type="match status" value="1"/>
</dbReference>
<dbReference type="FunFam" id="3.40.50.1100:FF:000001">
    <property type="entry name" value="Tryptophan synthase beta chain"/>
    <property type="match status" value="1"/>
</dbReference>
<dbReference type="FunFam" id="3.40.50.1100:FF:000004">
    <property type="entry name" value="Tryptophan synthase beta chain"/>
    <property type="match status" value="1"/>
</dbReference>
<dbReference type="Gene3D" id="3.40.50.1100">
    <property type="match status" value="2"/>
</dbReference>
<dbReference type="HAMAP" id="MF_00133">
    <property type="entry name" value="Trp_synth_beta"/>
    <property type="match status" value="1"/>
</dbReference>
<dbReference type="InterPro" id="IPR006653">
    <property type="entry name" value="Trp_synth_b_CS"/>
</dbReference>
<dbReference type="InterPro" id="IPR006654">
    <property type="entry name" value="Trp_synth_beta"/>
</dbReference>
<dbReference type="InterPro" id="IPR023026">
    <property type="entry name" value="Trp_synth_beta/beta-like"/>
</dbReference>
<dbReference type="InterPro" id="IPR001926">
    <property type="entry name" value="TrpB-like_PALP"/>
</dbReference>
<dbReference type="InterPro" id="IPR036052">
    <property type="entry name" value="TrpB-like_PALP_sf"/>
</dbReference>
<dbReference type="NCBIfam" id="TIGR00263">
    <property type="entry name" value="trpB"/>
    <property type="match status" value="1"/>
</dbReference>
<dbReference type="PANTHER" id="PTHR48077:SF3">
    <property type="entry name" value="TRYPTOPHAN SYNTHASE"/>
    <property type="match status" value="1"/>
</dbReference>
<dbReference type="PANTHER" id="PTHR48077">
    <property type="entry name" value="TRYPTOPHAN SYNTHASE-RELATED"/>
    <property type="match status" value="1"/>
</dbReference>
<dbReference type="Pfam" id="PF00291">
    <property type="entry name" value="PALP"/>
    <property type="match status" value="1"/>
</dbReference>
<dbReference type="PIRSF" id="PIRSF001413">
    <property type="entry name" value="Trp_syn_beta"/>
    <property type="match status" value="1"/>
</dbReference>
<dbReference type="SUPFAM" id="SSF53686">
    <property type="entry name" value="Tryptophan synthase beta subunit-like PLP-dependent enzymes"/>
    <property type="match status" value="1"/>
</dbReference>
<dbReference type="PROSITE" id="PS00168">
    <property type="entry name" value="TRP_SYNTHASE_BETA"/>
    <property type="match status" value="1"/>
</dbReference>
<sequence length="396" mass="42646">MTTLNPYFGEFGGMYVPQILVPALKQLEDAFVSAQLDPEFQAAFQDLLKNYAGRPTALTLCQNLTKGTKTKLYLKREDLLHGGAHKTNQVLGQALLAKRMGKTEIIAETGAGQHGVASALACALLGLKCRIYMGAKDIERQSPNVFRMRLMGAEVIPVHSGSSTLKDACNEALRDWSGTYETAHYMLGTAAGPHPYPTIVREFQRMIGEETKAQILEKEGRLPDAVLACVGGGSNAIGMFADFIDEPDVGLIGVEPAGLGIETGQHGAPLKHGKVGIYFGMKSPMMQTSDGQIEESYSISAGLDFPSVGPQHAYLNSIGRADYVSITDDEALDAFKTLSCKEGIIPALESSHALAHALKMIKADPDKEQILVVNLSGRGDKDIFTVHDILKARGEI</sequence>
<organism>
    <name type="scientific">Yersinia pseudotuberculosis serotype I (strain IP32953)</name>
    <dbReference type="NCBI Taxonomy" id="273123"/>
    <lineage>
        <taxon>Bacteria</taxon>
        <taxon>Pseudomonadati</taxon>
        <taxon>Pseudomonadota</taxon>
        <taxon>Gammaproteobacteria</taxon>
        <taxon>Enterobacterales</taxon>
        <taxon>Yersiniaceae</taxon>
        <taxon>Yersinia</taxon>
    </lineage>
</organism>
<gene>
    <name evidence="1" type="primary">trpB</name>
    <name type="ordered locus">YPTB2126</name>
</gene>
<protein>
    <recommendedName>
        <fullName evidence="1">Tryptophan synthase beta chain</fullName>
        <ecNumber evidence="1">4.2.1.20</ecNumber>
    </recommendedName>
</protein>
<evidence type="ECO:0000255" key="1">
    <source>
        <dbReference type="HAMAP-Rule" id="MF_00133"/>
    </source>
</evidence>